<reference key="1">
    <citation type="journal article" date="2007" name="PLoS ONE">
        <title>Analysis of the neurotoxin complex genes in Clostridium botulinum A1-A4 and B1 strains: BoNT/A3, /Ba4 and /B1 clusters are located within plasmids.</title>
        <authorList>
            <person name="Smith T.J."/>
            <person name="Hill K.K."/>
            <person name="Foley B.T."/>
            <person name="Detter J.C."/>
            <person name="Munk A.C."/>
            <person name="Bruce D.C."/>
            <person name="Doggett N.A."/>
            <person name="Smith L.A."/>
            <person name="Marks J.D."/>
            <person name="Xie G."/>
            <person name="Brettin T.S."/>
        </authorList>
    </citation>
    <scope>NUCLEOTIDE SEQUENCE [LARGE SCALE GENOMIC DNA]</scope>
    <source>
        <strain>ATCC 19397 / Type A</strain>
    </source>
</reference>
<evidence type="ECO:0000255" key="1">
    <source>
        <dbReference type="HAMAP-Rule" id="MF_01440"/>
    </source>
</evidence>
<name>CHED_CLOB1</name>
<sequence>MDIKEIKVGIADLNVGKNPDKIITVGLGSCIGIALYDGIKCIGGLSHIMLPDSTQFSKVTNPMKFADLAIPILVEKMEKLGARKNGLKAKICGGASMFNFSDKSMVMDIGNRNGKAVKEKLKELSIPLLAEDIGGNKGRTMIFDTSTGKVYIKTVGLGTKEI</sequence>
<accession>A7FX01</accession>
<gene>
    <name evidence="1" type="primary">cheD</name>
    <name type="ordered locus">CLB_2692</name>
</gene>
<protein>
    <recommendedName>
        <fullName evidence="1">Probable chemoreceptor glutamine deamidase CheD</fullName>
        <ecNumber evidence="1">3.5.1.44</ecNumber>
    </recommendedName>
</protein>
<dbReference type="EC" id="3.5.1.44" evidence="1"/>
<dbReference type="EMBL" id="CP000726">
    <property type="protein sequence ID" value="ABS35385.1"/>
    <property type="molecule type" value="Genomic_DNA"/>
</dbReference>
<dbReference type="RefSeq" id="WP_003359122.1">
    <property type="nucleotide sequence ID" value="NC_009697.1"/>
</dbReference>
<dbReference type="SMR" id="A7FX01"/>
<dbReference type="KEGG" id="cba:CLB_2692"/>
<dbReference type="HOGENOM" id="CLU_087854_2_0_9"/>
<dbReference type="GO" id="GO:0050568">
    <property type="term" value="F:protein-glutamine glutaminase activity"/>
    <property type="evidence" value="ECO:0007669"/>
    <property type="project" value="UniProtKB-UniRule"/>
</dbReference>
<dbReference type="GO" id="GO:0006935">
    <property type="term" value="P:chemotaxis"/>
    <property type="evidence" value="ECO:0007669"/>
    <property type="project" value="UniProtKB-UniRule"/>
</dbReference>
<dbReference type="CDD" id="cd16352">
    <property type="entry name" value="CheD"/>
    <property type="match status" value="1"/>
</dbReference>
<dbReference type="Gene3D" id="3.30.1330.200">
    <property type="match status" value="1"/>
</dbReference>
<dbReference type="HAMAP" id="MF_01440">
    <property type="entry name" value="CheD"/>
    <property type="match status" value="1"/>
</dbReference>
<dbReference type="InterPro" id="IPR038592">
    <property type="entry name" value="CheD-like_sf"/>
</dbReference>
<dbReference type="InterPro" id="IPR005659">
    <property type="entry name" value="Chemorcpt_Glu_NH3ase_CheD"/>
</dbReference>
<dbReference type="InterPro" id="IPR011324">
    <property type="entry name" value="Cytotoxic_necrot_fac-like_cat"/>
</dbReference>
<dbReference type="NCBIfam" id="NF010015">
    <property type="entry name" value="PRK13490.1"/>
    <property type="match status" value="1"/>
</dbReference>
<dbReference type="PANTHER" id="PTHR35147">
    <property type="entry name" value="CHEMORECEPTOR GLUTAMINE DEAMIDASE CHED-RELATED"/>
    <property type="match status" value="1"/>
</dbReference>
<dbReference type="PANTHER" id="PTHR35147:SF1">
    <property type="entry name" value="CHEMORECEPTOR GLUTAMINE DEAMIDASE CHED-RELATED"/>
    <property type="match status" value="1"/>
</dbReference>
<dbReference type="Pfam" id="PF03975">
    <property type="entry name" value="CheD"/>
    <property type="match status" value="1"/>
</dbReference>
<dbReference type="SUPFAM" id="SSF64438">
    <property type="entry name" value="CNF1/YfiH-like putative cysteine hydrolases"/>
    <property type="match status" value="1"/>
</dbReference>
<proteinExistence type="inferred from homology"/>
<feature type="chain" id="PRO_1000073513" description="Probable chemoreceptor glutamine deamidase CheD">
    <location>
        <begin position="1"/>
        <end position="162"/>
    </location>
</feature>
<keyword id="KW-0145">Chemotaxis</keyword>
<keyword id="KW-0378">Hydrolase</keyword>
<organism>
    <name type="scientific">Clostridium botulinum (strain ATCC 19397 / Type A)</name>
    <dbReference type="NCBI Taxonomy" id="441770"/>
    <lineage>
        <taxon>Bacteria</taxon>
        <taxon>Bacillati</taxon>
        <taxon>Bacillota</taxon>
        <taxon>Clostridia</taxon>
        <taxon>Eubacteriales</taxon>
        <taxon>Clostridiaceae</taxon>
        <taxon>Clostridium</taxon>
    </lineage>
</organism>
<comment type="function">
    <text evidence="1">Probably deamidates glutamine residues to glutamate on methyl-accepting chemotaxis receptors (MCPs), playing an important role in chemotaxis.</text>
</comment>
<comment type="catalytic activity">
    <reaction evidence="1">
        <text>L-glutaminyl-[protein] + H2O = L-glutamyl-[protein] + NH4(+)</text>
        <dbReference type="Rhea" id="RHEA:16441"/>
        <dbReference type="Rhea" id="RHEA-COMP:10207"/>
        <dbReference type="Rhea" id="RHEA-COMP:10208"/>
        <dbReference type="ChEBI" id="CHEBI:15377"/>
        <dbReference type="ChEBI" id="CHEBI:28938"/>
        <dbReference type="ChEBI" id="CHEBI:29973"/>
        <dbReference type="ChEBI" id="CHEBI:30011"/>
        <dbReference type="EC" id="3.5.1.44"/>
    </reaction>
</comment>
<comment type="similarity">
    <text evidence="1">Belongs to the CheD family.</text>
</comment>